<keyword id="KW-0134">Cell wall</keyword>
<keyword id="KW-1185">Reference proteome</keyword>
<keyword id="KW-0677">Repeat</keyword>
<keyword id="KW-0701">S-layer</keyword>
<keyword id="KW-0964">Secreted</keyword>
<keyword id="KW-0732">Signal</keyword>
<accession>Q06852</accession>
<accession>A3DJZ5</accession>
<evidence type="ECO:0000255" key="1"/>
<evidence type="ECO:0000255" key="2">
    <source>
        <dbReference type="PROSITE-ProRule" id="PRU00777"/>
    </source>
</evidence>
<evidence type="ECO:0000256" key="3">
    <source>
        <dbReference type="SAM" id="MobiDB-lite"/>
    </source>
</evidence>
<evidence type="ECO:0000305" key="4"/>
<comment type="subunit">
    <text>Assembled into mono-layered crystalline arrays.</text>
</comment>
<comment type="subcellular location">
    <subcellularLocation>
        <location>Secreted</location>
        <location>Cell wall</location>
        <location>S-layer</location>
    </subcellularLocation>
</comment>
<feature type="signal peptide" evidence="1">
    <location>
        <begin position="1"/>
        <end position="28"/>
    </location>
</feature>
<feature type="chain" id="PRO_0000032634" description="Cell surface glycoprotein 1">
    <location>
        <begin position="29"/>
        <end position="2313"/>
    </location>
</feature>
<feature type="domain" description="Cohesin 1">
    <location>
        <begin position="34"/>
        <end position="197"/>
    </location>
</feature>
<feature type="domain" description="Cohesin 2">
    <location>
        <begin position="205"/>
        <end position="367"/>
    </location>
</feature>
<feature type="domain" description="Cohesin 3">
    <location>
        <begin position="407"/>
        <end position="569"/>
    </location>
</feature>
<feature type="domain" description="Cohesin 4">
    <location>
        <begin position="609"/>
        <end position="771"/>
    </location>
</feature>
<feature type="domain" description="Cohesin 5">
    <location>
        <begin position="811"/>
        <end position="973"/>
    </location>
</feature>
<feature type="domain" description="Cohesin 6">
    <location>
        <begin position="1013"/>
        <end position="1175"/>
    </location>
</feature>
<feature type="domain" description="Cohesin 7">
    <location>
        <begin position="1211"/>
        <end position="1375"/>
    </location>
</feature>
<feature type="domain" description="SLH 1" evidence="2">
    <location>
        <begin position="2067"/>
        <end position="2140"/>
    </location>
</feature>
<feature type="domain" description="SLH 2" evidence="2">
    <location>
        <begin position="2141"/>
        <end position="2204"/>
    </location>
</feature>
<feature type="domain" description="SLH 3" evidence="2">
    <location>
        <begin position="2211"/>
        <end position="2274"/>
    </location>
</feature>
<feature type="region of interest" description="Disordered" evidence="3">
    <location>
        <begin position="369"/>
        <end position="400"/>
    </location>
</feature>
<feature type="region of interest" description="Disordered" evidence="3">
    <location>
        <begin position="571"/>
        <end position="602"/>
    </location>
</feature>
<feature type="region of interest" description="Disordered" evidence="3">
    <location>
        <begin position="772"/>
        <end position="805"/>
    </location>
</feature>
<feature type="region of interest" description="Disordered" evidence="3">
    <location>
        <begin position="974"/>
        <end position="1007"/>
    </location>
</feature>
<feature type="region of interest" description="Disordered" evidence="3">
    <location>
        <begin position="1177"/>
        <end position="1203"/>
    </location>
</feature>
<feature type="region of interest" description="Disordered" evidence="3">
    <location>
        <begin position="1374"/>
        <end position="2111"/>
    </location>
</feature>
<feature type="region of interest" description="Approximate tandem repeats of T-P-S-D-E-P">
    <location>
        <begin position="1383"/>
        <end position="2025"/>
    </location>
</feature>
<feature type="compositionally biased region" description="Acidic residues" evidence="3">
    <location>
        <begin position="369"/>
        <end position="378"/>
    </location>
</feature>
<feature type="compositionally biased region" description="Low complexity" evidence="3">
    <location>
        <begin position="380"/>
        <end position="400"/>
    </location>
</feature>
<feature type="compositionally biased region" description="Acidic residues" evidence="3">
    <location>
        <begin position="571"/>
        <end position="580"/>
    </location>
</feature>
<feature type="compositionally biased region" description="Low complexity" evidence="3">
    <location>
        <begin position="582"/>
        <end position="602"/>
    </location>
</feature>
<feature type="compositionally biased region" description="Acidic residues" evidence="3">
    <location>
        <begin position="772"/>
        <end position="782"/>
    </location>
</feature>
<feature type="compositionally biased region" description="Low complexity" evidence="3">
    <location>
        <begin position="784"/>
        <end position="803"/>
    </location>
</feature>
<feature type="compositionally biased region" description="Acidic residues" evidence="3">
    <location>
        <begin position="974"/>
        <end position="984"/>
    </location>
</feature>
<feature type="compositionally biased region" description="Low complexity" evidence="3">
    <location>
        <begin position="986"/>
        <end position="1007"/>
    </location>
</feature>
<feature type="compositionally biased region" description="Low complexity" evidence="3">
    <location>
        <begin position="1184"/>
        <end position="1203"/>
    </location>
</feature>
<feature type="compositionally biased region" description="Low complexity" evidence="3">
    <location>
        <begin position="1376"/>
        <end position="1390"/>
    </location>
</feature>
<feature type="compositionally biased region" description="Pro residues" evidence="3">
    <location>
        <begin position="1391"/>
        <end position="1411"/>
    </location>
</feature>
<feature type="compositionally biased region" description="Low complexity" evidence="3">
    <location>
        <begin position="1423"/>
        <end position="1433"/>
    </location>
</feature>
<feature type="compositionally biased region" description="Pro residues" evidence="3">
    <location>
        <begin position="1434"/>
        <end position="1454"/>
    </location>
</feature>
<feature type="compositionally biased region" description="Low complexity" evidence="3">
    <location>
        <begin position="1466"/>
        <end position="1476"/>
    </location>
</feature>
<feature type="compositionally biased region" description="Pro residues" evidence="3">
    <location>
        <begin position="1477"/>
        <end position="1497"/>
    </location>
</feature>
<feature type="compositionally biased region" description="Low complexity" evidence="3">
    <location>
        <begin position="1509"/>
        <end position="1519"/>
    </location>
</feature>
<feature type="compositionally biased region" description="Pro residues" evidence="3">
    <location>
        <begin position="1520"/>
        <end position="1540"/>
    </location>
</feature>
<feature type="compositionally biased region" description="Low complexity" evidence="3">
    <location>
        <begin position="1552"/>
        <end position="1562"/>
    </location>
</feature>
<feature type="compositionally biased region" description="Pro residues" evidence="3">
    <location>
        <begin position="1563"/>
        <end position="1595"/>
    </location>
</feature>
<feature type="compositionally biased region" description="Low complexity" evidence="3">
    <location>
        <begin position="1607"/>
        <end position="1617"/>
    </location>
</feature>
<feature type="compositionally biased region" description="Pro residues" evidence="3">
    <location>
        <begin position="1618"/>
        <end position="1650"/>
    </location>
</feature>
<feature type="compositionally biased region" description="Low complexity" evidence="3">
    <location>
        <begin position="1662"/>
        <end position="1672"/>
    </location>
</feature>
<feature type="compositionally biased region" description="Pro residues" evidence="3">
    <location>
        <begin position="1673"/>
        <end position="1693"/>
    </location>
</feature>
<feature type="compositionally biased region" description="Low complexity" evidence="3">
    <location>
        <begin position="1705"/>
        <end position="1715"/>
    </location>
</feature>
<feature type="compositionally biased region" description="Pro residues" evidence="3">
    <location>
        <begin position="1716"/>
        <end position="1736"/>
    </location>
</feature>
<feature type="compositionally biased region" description="Low complexity" evidence="3">
    <location>
        <begin position="1748"/>
        <end position="1758"/>
    </location>
</feature>
<feature type="compositionally biased region" description="Pro residues" evidence="3">
    <location>
        <begin position="1759"/>
        <end position="1779"/>
    </location>
</feature>
<feature type="compositionally biased region" description="Low complexity" evidence="3">
    <location>
        <begin position="1791"/>
        <end position="1801"/>
    </location>
</feature>
<feature type="compositionally biased region" description="Pro residues" evidence="3">
    <location>
        <begin position="1802"/>
        <end position="1822"/>
    </location>
</feature>
<feature type="compositionally biased region" description="Low complexity" evidence="3">
    <location>
        <begin position="1834"/>
        <end position="1844"/>
    </location>
</feature>
<feature type="compositionally biased region" description="Pro residues" evidence="3">
    <location>
        <begin position="1845"/>
        <end position="1865"/>
    </location>
</feature>
<feature type="compositionally biased region" description="Low complexity" evidence="3">
    <location>
        <begin position="1877"/>
        <end position="1887"/>
    </location>
</feature>
<feature type="compositionally biased region" description="Pro residues" evidence="3">
    <location>
        <begin position="1888"/>
        <end position="1908"/>
    </location>
</feature>
<feature type="compositionally biased region" description="Low complexity" evidence="3">
    <location>
        <begin position="1920"/>
        <end position="1930"/>
    </location>
</feature>
<feature type="compositionally biased region" description="Pro residues" evidence="3">
    <location>
        <begin position="1931"/>
        <end position="1963"/>
    </location>
</feature>
<feature type="compositionally biased region" description="Low complexity" evidence="3">
    <location>
        <begin position="1975"/>
        <end position="1985"/>
    </location>
</feature>
<feature type="compositionally biased region" description="Pro residues" evidence="3">
    <location>
        <begin position="1986"/>
        <end position="2018"/>
    </location>
</feature>
<feature type="compositionally biased region" description="Pro residues" evidence="3">
    <location>
        <begin position="2027"/>
        <end position="2039"/>
    </location>
</feature>
<feature type="compositionally biased region" description="Gly residues" evidence="3">
    <location>
        <begin position="2045"/>
        <end position="2062"/>
    </location>
</feature>
<feature type="compositionally biased region" description="Low complexity" evidence="3">
    <location>
        <begin position="2073"/>
        <end position="2082"/>
    </location>
</feature>
<feature type="sequence conflict" description="In Ref. 1; CAA47841." evidence="4" ref="1">
    <location>
        <begin position="367"/>
        <end position="972"/>
    </location>
</feature>
<feature type="sequence conflict" description="In Ref. 1; CAA47841." evidence="4" ref="1">
    <location>
        <begin position="1762"/>
        <end position="1804"/>
    </location>
</feature>
<gene>
    <name type="primary">olpB</name>
    <name type="ordered locus">Cthe_3078</name>
</gene>
<name>SLAP1_ACET2</name>
<protein>
    <recommendedName>
        <fullName>Cell surface glycoprotein 1</fullName>
    </recommendedName>
    <alternativeName>
        <fullName>Outer layer protein B</fullName>
    </alternativeName>
    <alternativeName>
        <fullName>S-layer protein 1</fullName>
    </alternativeName>
</protein>
<organism>
    <name type="scientific">Acetivibrio thermocellus (strain ATCC 27405 / DSM 1237 / JCM 9322 / NBRC 103400 / NCIMB 10682 / NRRL B-4536 / VPI 7372)</name>
    <name type="common">Clostridium thermocellum</name>
    <dbReference type="NCBI Taxonomy" id="203119"/>
    <lineage>
        <taxon>Bacteria</taxon>
        <taxon>Bacillati</taxon>
        <taxon>Bacillota</taxon>
        <taxon>Clostridia</taxon>
        <taxon>Eubacteriales</taxon>
        <taxon>Oscillospiraceae</taxon>
        <taxon>Acetivibrio</taxon>
    </lineage>
</organism>
<dbReference type="EMBL" id="X67506">
    <property type="protein sequence ID" value="CAA47841.1"/>
    <property type="molecule type" value="Genomic_DNA"/>
</dbReference>
<dbReference type="EMBL" id="CP000568">
    <property type="protein sequence ID" value="ABN54274.1"/>
    <property type="molecule type" value="Genomic_DNA"/>
</dbReference>
<dbReference type="PIR" id="T18262">
    <property type="entry name" value="T18262"/>
</dbReference>
<dbReference type="RefSeq" id="WP_020458018.1">
    <property type="nucleotide sequence ID" value="NC_009012.1"/>
</dbReference>
<dbReference type="SMR" id="Q06852"/>
<dbReference type="STRING" id="203119.Cthe_3078"/>
<dbReference type="GeneID" id="35803238"/>
<dbReference type="KEGG" id="cth:Cthe_3078"/>
<dbReference type="eggNOG" id="COG1361">
    <property type="taxonomic scope" value="Bacteria"/>
</dbReference>
<dbReference type="eggNOG" id="COG2911">
    <property type="taxonomic scope" value="Bacteria"/>
</dbReference>
<dbReference type="eggNOG" id="COG3266">
    <property type="taxonomic scope" value="Bacteria"/>
</dbReference>
<dbReference type="HOGENOM" id="CLU_230037_0_0_9"/>
<dbReference type="OrthoDB" id="2087358at2"/>
<dbReference type="BioCyc" id="MetaCyc:MONOMER-16411"/>
<dbReference type="Proteomes" id="UP000002145">
    <property type="component" value="Chromosome"/>
</dbReference>
<dbReference type="GO" id="GO:0005576">
    <property type="term" value="C:extracellular region"/>
    <property type="evidence" value="ECO:0007669"/>
    <property type="project" value="UniProtKB-KW"/>
</dbReference>
<dbReference type="GO" id="GO:0030115">
    <property type="term" value="C:S-layer"/>
    <property type="evidence" value="ECO:0007669"/>
    <property type="project" value="UniProtKB-SubCell"/>
</dbReference>
<dbReference type="GO" id="GO:0030246">
    <property type="term" value="F:carbohydrate binding"/>
    <property type="evidence" value="ECO:0007669"/>
    <property type="project" value="InterPro"/>
</dbReference>
<dbReference type="GO" id="GO:0000272">
    <property type="term" value="P:polysaccharide catabolic process"/>
    <property type="evidence" value="ECO:0007669"/>
    <property type="project" value="InterPro"/>
</dbReference>
<dbReference type="CDD" id="cd08547">
    <property type="entry name" value="Type_II_cohesin"/>
    <property type="match status" value="7"/>
</dbReference>
<dbReference type="Gene3D" id="2.60.40.680">
    <property type="match status" value="7"/>
</dbReference>
<dbReference type="InterPro" id="IPR008965">
    <property type="entry name" value="CBM2/CBM3_carb-bd_dom_sf"/>
</dbReference>
<dbReference type="InterPro" id="IPR051465">
    <property type="entry name" value="Cell_Envelope_Struct_Comp"/>
</dbReference>
<dbReference type="InterPro" id="IPR002102">
    <property type="entry name" value="Cohesin_dom"/>
</dbReference>
<dbReference type="InterPro" id="IPR001119">
    <property type="entry name" value="SLH_dom"/>
</dbReference>
<dbReference type="PANTHER" id="PTHR43308">
    <property type="entry name" value="OUTER MEMBRANE PROTEIN ALPHA-RELATED"/>
    <property type="match status" value="1"/>
</dbReference>
<dbReference type="PANTHER" id="PTHR43308:SF5">
    <property type="entry name" value="S-LAYER PROTEIN _ PEPTIDOGLYCAN ENDO-BETA-N-ACETYLGLUCOSAMINIDASE"/>
    <property type="match status" value="1"/>
</dbReference>
<dbReference type="Pfam" id="PF00963">
    <property type="entry name" value="Cohesin"/>
    <property type="match status" value="7"/>
</dbReference>
<dbReference type="Pfam" id="PF00395">
    <property type="entry name" value="SLH"/>
    <property type="match status" value="3"/>
</dbReference>
<dbReference type="SUPFAM" id="SSF49384">
    <property type="entry name" value="Carbohydrate-binding domain"/>
    <property type="match status" value="7"/>
</dbReference>
<dbReference type="PROSITE" id="PS51272">
    <property type="entry name" value="SLH"/>
    <property type="match status" value="3"/>
</dbReference>
<proteinExistence type="inferred from homology"/>
<reference key="1">
    <citation type="journal article" date="1993" name="J. Bacteriol.">
        <title>Organization of a Clostridium thermocellum gene cluster encoding the cellulosomal scaffolding protein CipA and a protein possibly involved in attachment of the cellulosome to the cell surface.</title>
        <authorList>
            <person name="Fujino T."/>
            <person name="Beguin P."/>
            <person name="Aubert J.-P."/>
        </authorList>
    </citation>
    <scope>NUCLEOTIDE SEQUENCE [GENOMIC DNA]</scope>
</reference>
<reference key="2">
    <citation type="submission" date="2007-02" db="EMBL/GenBank/DDBJ databases">
        <title>Complete sequence of Clostridium thermocellum ATCC 27405.</title>
        <authorList>
            <consortium name="US DOE Joint Genome Institute"/>
            <person name="Copeland A."/>
            <person name="Lucas S."/>
            <person name="Lapidus A."/>
            <person name="Barry K."/>
            <person name="Detter J.C."/>
            <person name="Glavina del Rio T."/>
            <person name="Hammon N."/>
            <person name="Israni S."/>
            <person name="Dalin E."/>
            <person name="Tice H."/>
            <person name="Pitluck S."/>
            <person name="Chertkov O."/>
            <person name="Brettin T."/>
            <person name="Bruce D."/>
            <person name="Han C."/>
            <person name="Tapia R."/>
            <person name="Gilna P."/>
            <person name="Schmutz J."/>
            <person name="Larimer F."/>
            <person name="Land M."/>
            <person name="Hauser L."/>
            <person name="Kyrpides N."/>
            <person name="Mikhailova N."/>
            <person name="Wu J.H.D."/>
            <person name="Newcomb M."/>
            <person name="Richardson P."/>
        </authorList>
    </citation>
    <scope>NUCLEOTIDE SEQUENCE [LARGE SCALE GENOMIC DNA]</scope>
    <source>
        <strain>ATCC 27405 / DSM 1237 / JCM 9322 / NBRC 103400 / NCIMB 10682 / NRRL B-4536 / VPI 7372</strain>
    </source>
</reference>
<sequence length="2313" mass="248168">MKRKNKVLSILLTLLLIISTTSVNMSFAEATPSIEMVLDKTEVHVGDVITATIKVNNIRKLAGYQLNIKFDPEVLQPVDPATGEEFTDKSMPVNRVLLTNSKYGPTPVAGNDIKSGIINFATGYNNLTAYKSSGIDEHTGIIGEIGFKVLKKQNTSIRFEDTLSMPGAISGTSLFDWDAETITGYEVIQPDLIVVEAEPLKDASVALELDKTKVKVGDIITATIKIENMKNFAGYQLNIKYDPTMLEAIELETGSAIAKRTWPVTGGTVLQSDNYGKTTAVANDVGAGIINFAEAYSNLTKYRETGVAEETGIIGKIGFRVLKAGSTAIRFEDTTAMPGAIEGTYMFDWYGENIKGYSVVQPGEIVVEGEEPGEEPTEEPVPTETSVDPTPTVTEEPVPSELPDSYVIMELDKTKVKVGDIITATIKIENMKNFAGYQLNIKYDPTMLEAIELETGSAIAKRTWPVTGGTVLQSDNYGKTTAVANDVGAGIINFAEAYSNLTKYRETGVAEETGIIGKIGFRVLKAGSTAIRFEDTTAMPGAIEGTYMFDWYGENIKGYSVVQPGEIVVEGEEPGEEPTEEPVPTETSVDPTPTVTEEPVPSELPDSYVIMELDKTKVKVGDIITATIKIENMKNFAGYQLNIKYDPTMLEAIELETGSAIAKRTWPVTGGTVLQSDNYGKTTAVANDVGAGIINFAEAYSNLTKYRETGVAEETGIIGKIGFRVLKAGSTAIRFEDTTAMPGAIEGTYMFDWYGENIKGYSVVQPGEIVAEGEEPGEEPTEEPVPTETSADPTPTVTEEPVPSELPDSYVIMELDKTKVKVGDIITATIKIENMKNFAGYQLNIKYDPTMLEAIELETGSAIAKRTWPVTGGTVLQSDNYGKTTAVANDVGAGIINFAEAYSNLTKYRETGVAEETGIIGKIGFRVLKAGSTAIRFEDTTAMPGAIEGTYMFDWYGENIKGYSVVQPGEIVAEGEEPGEEPTEEPVPTETPVDPTPTVTEEPVPSELPDSYVIMELDKTKVKVGDIITATIKIENMKNFAGYQLNIKYDPTMLEAIELETGSAIAKRTWPVTGGTVLQSDNYGKTTAVANDVGAGIINFAEAYSNLTKYRETGVAEETGIIGKIGFRVLKAGSTAIRFEDTTAMPGAIEGTYMFDWYGENIKGYSVVQPGEIVAEGEEPTEEPVPTETPVDPTPTVTEEPVPSELPDSYVIMELDKTKVKEGDVIIATIRVNNIKNLAGYQIGIKYDPKVLEAFNIETGDPIDEGTWPAVGGTILKNRDYLPTGVAINNVSKGILNFAAYYVYFDDYREEGKSEDTGIIGNIGFRVLKAEDTTIRFEELESMPGSIDGTYMLDWYLNRISGYVVIQPAPIKAASDEPIPTDTPSDEPTPSDEPTPSDEPTPSDEPTPSDEPTPSETPEEPIPTDTPSDEPTPSDEPTPSDEPTPSDEPTPSDEPTPSETPEEPIPTDTPSDEPTPSDEPTPSDEPTPSDEPTPSDEPTPSETPEEPIPTDTPSDEPTPSDEPTPSDEPTPSDEPTPSDEPTPSETPEEPIPTDTPSDEPTPSDEPTPSDEPTPSDEPTPSDEPTPSDEPTPSDEPTPSETPEEPIPTDTPSDEPTPSDEPTPSDEPTPSDEPTPSDEPTPSDEPTPSDEPTPSETPEEPIPTDTPSDEPTPSDEPTPSDEPTPSDEPTPSDEPTPSETPEEPIPTDTPSDEPTPSDEPTPSDEPTPSDEPTPSDEPTPSETPEEPIPTDTPSDEPTPSDEPTPSDEPTPSDEPTPSDEPTPSETPEEPIPTDTPSDEPTPSDEPTPSDEPTPSDEPTPSDEPTPSETPEEPIPTDTPSDEPTPSDEPTPSDEPTPSDEPTPSDEPTPSETPEEPIPTDTPSDEPTPSDEPTPSDEPTPSDEPTPSDEPTPSETPEEPIPTDTPSDEPTPSDEPTPSDEPTPSDEPTPSDEPTPSDEPTPSDEPTPSETPEEPIPTDTPSDEPTPSDEPTPSDEPTPSDEPTPSDEPTPSDEPTPSDEPTPSETPEEPTPTTTPTPTPSTTPTSGSGGSGGSGGGGGGGGGTVPTSPTPTPTSKPTSTPAPTEIEEPTPSDVPGAIGGEHRAYLRGYPDGSFRPERNITRAEAAVIFAKLLGADESYGAQSASPYSDLADTHWAAWAIKFATSQGLFKGYPDGTFKPDQNITRAEFATVVLHFLTKVKGQEIMSKLATIDISNPKFDDCVGHWAQEFIEKLTSLGYISGYPDGTFKPQNYIKRSESVALINRALERGPLNGAPKLFPDVNESYWAFGDIMDGALDHSYIIEDEKEKFVKLLED</sequence>